<reference key="1">
    <citation type="journal article" date="2002" name="J. Biol. Chem.">
        <title>Functional conservation of subfamilies of putative UDP-N-acetylgalactosamine:polypeptide N-acetylgalactosaminyltransferases in Drosophila, Caenorhabditis elegans, and mammals. One subfamily composed of l(2)35Aa is essential in Drosophila.</title>
        <authorList>
            <person name="Schwientek T."/>
            <person name="Bennett E.P."/>
            <person name="Flores C."/>
            <person name="Thacker J."/>
            <person name="Hollmann M."/>
            <person name="Reis C.A."/>
            <person name="Behrens J."/>
            <person name="Mandel U."/>
            <person name="Keck B."/>
            <person name="Schaefer M.A."/>
            <person name="Haselmann K."/>
            <person name="Zubarev R."/>
            <person name="Roepstorff P."/>
            <person name="Burchell J.M."/>
            <person name="Taylor-Papadimitriou J."/>
            <person name="Hollingsworth M.A."/>
            <person name="Clausen H."/>
        </authorList>
    </citation>
    <scope>NUCLEOTIDE SEQUENCE [MRNA] (ISOFORM 1)</scope>
    <scope>FUNCTION</scope>
    <scope>ENZYME ACTIVITY</scope>
    <scope>SUBCELLULAR LOCATION</scope>
    <scope>TISSUE SPECIFICITY</scope>
</reference>
<reference key="2">
    <citation type="submission" date="2011-09" db="EMBL/GenBank/DDBJ databases">
        <authorList>
            <person name="Bennett E.P."/>
        </authorList>
    </citation>
    <scope>SEQUENCE REVISION TO 14-15; 119; 295; 310; 365 AND 369</scope>
</reference>
<reference key="3">
    <citation type="journal article" date="2004" name="Nat. Genet.">
        <title>Complete sequencing and characterization of 21,243 full-length human cDNAs.</title>
        <authorList>
            <person name="Ota T."/>
            <person name="Suzuki Y."/>
            <person name="Nishikawa T."/>
            <person name="Otsuki T."/>
            <person name="Sugiyama T."/>
            <person name="Irie R."/>
            <person name="Wakamatsu A."/>
            <person name="Hayashi K."/>
            <person name="Sato H."/>
            <person name="Nagai K."/>
            <person name="Kimura K."/>
            <person name="Makita H."/>
            <person name="Sekine M."/>
            <person name="Obayashi M."/>
            <person name="Nishi T."/>
            <person name="Shibahara T."/>
            <person name="Tanaka T."/>
            <person name="Ishii S."/>
            <person name="Yamamoto J."/>
            <person name="Saito K."/>
            <person name="Kawai Y."/>
            <person name="Isono Y."/>
            <person name="Nakamura Y."/>
            <person name="Nagahari K."/>
            <person name="Murakami K."/>
            <person name="Yasuda T."/>
            <person name="Iwayanagi T."/>
            <person name="Wagatsuma M."/>
            <person name="Shiratori A."/>
            <person name="Sudo H."/>
            <person name="Hosoiri T."/>
            <person name="Kaku Y."/>
            <person name="Kodaira H."/>
            <person name="Kondo H."/>
            <person name="Sugawara M."/>
            <person name="Takahashi M."/>
            <person name="Kanda K."/>
            <person name="Yokoi T."/>
            <person name="Furuya T."/>
            <person name="Kikkawa E."/>
            <person name="Omura Y."/>
            <person name="Abe K."/>
            <person name="Kamihara K."/>
            <person name="Katsuta N."/>
            <person name="Sato K."/>
            <person name="Tanikawa M."/>
            <person name="Yamazaki M."/>
            <person name="Ninomiya K."/>
            <person name="Ishibashi T."/>
            <person name="Yamashita H."/>
            <person name="Murakawa K."/>
            <person name="Fujimori K."/>
            <person name="Tanai H."/>
            <person name="Kimata M."/>
            <person name="Watanabe M."/>
            <person name="Hiraoka S."/>
            <person name="Chiba Y."/>
            <person name="Ishida S."/>
            <person name="Ono Y."/>
            <person name="Takiguchi S."/>
            <person name="Watanabe S."/>
            <person name="Yosida M."/>
            <person name="Hotuta T."/>
            <person name="Kusano J."/>
            <person name="Kanehori K."/>
            <person name="Takahashi-Fujii A."/>
            <person name="Hara H."/>
            <person name="Tanase T.-O."/>
            <person name="Nomura Y."/>
            <person name="Togiya S."/>
            <person name="Komai F."/>
            <person name="Hara R."/>
            <person name="Takeuchi K."/>
            <person name="Arita M."/>
            <person name="Imose N."/>
            <person name="Musashino K."/>
            <person name="Yuuki H."/>
            <person name="Oshima A."/>
            <person name="Sasaki N."/>
            <person name="Aotsuka S."/>
            <person name="Yoshikawa Y."/>
            <person name="Matsunawa H."/>
            <person name="Ichihara T."/>
            <person name="Shiohata N."/>
            <person name="Sano S."/>
            <person name="Moriya S."/>
            <person name="Momiyama H."/>
            <person name="Satoh N."/>
            <person name="Takami S."/>
            <person name="Terashima Y."/>
            <person name="Suzuki O."/>
            <person name="Nakagawa S."/>
            <person name="Senoh A."/>
            <person name="Mizoguchi H."/>
            <person name="Goto Y."/>
            <person name="Shimizu F."/>
            <person name="Wakebe H."/>
            <person name="Hishigaki H."/>
            <person name="Watanabe T."/>
            <person name="Sugiyama A."/>
            <person name="Takemoto M."/>
            <person name="Kawakami B."/>
            <person name="Yamazaki M."/>
            <person name="Watanabe K."/>
            <person name="Kumagai A."/>
            <person name="Itakura S."/>
            <person name="Fukuzumi Y."/>
            <person name="Fujimori Y."/>
            <person name="Komiyama M."/>
            <person name="Tashiro H."/>
            <person name="Tanigami A."/>
            <person name="Fujiwara T."/>
            <person name="Ono T."/>
            <person name="Yamada K."/>
            <person name="Fujii Y."/>
            <person name="Ozaki K."/>
            <person name="Hirao M."/>
            <person name="Ohmori Y."/>
            <person name="Kawabata A."/>
            <person name="Hikiji T."/>
            <person name="Kobatake N."/>
            <person name="Inagaki H."/>
            <person name="Ikema Y."/>
            <person name="Okamoto S."/>
            <person name="Okitani R."/>
            <person name="Kawakami T."/>
            <person name="Noguchi S."/>
            <person name="Itoh T."/>
            <person name="Shigeta K."/>
            <person name="Senba T."/>
            <person name="Matsumura K."/>
            <person name="Nakajima Y."/>
            <person name="Mizuno T."/>
            <person name="Morinaga M."/>
            <person name="Sasaki M."/>
            <person name="Togashi T."/>
            <person name="Oyama M."/>
            <person name="Hata H."/>
            <person name="Watanabe M."/>
            <person name="Komatsu T."/>
            <person name="Mizushima-Sugano J."/>
            <person name="Satoh T."/>
            <person name="Shirai Y."/>
            <person name="Takahashi Y."/>
            <person name="Nakagawa K."/>
            <person name="Okumura K."/>
            <person name="Nagase T."/>
            <person name="Nomura N."/>
            <person name="Kikuchi H."/>
            <person name="Masuho Y."/>
            <person name="Yamashita R."/>
            <person name="Nakai K."/>
            <person name="Yada T."/>
            <person name="Nakamura Y."/>
            <person name="Ohara O."/>
            <person name="Isogai T."/>
            <person name="Sugano S."/>
        </authorList>
    </citation>
    <scope>NUCLEOTIDE SEQUENCE [LARGE SCALE MRNA] (ISOFORM 1)</scope>
    <source>
        <tissue>Colon</tissue>
        <tissue>Kidney epithelium</tissue>
        <tissue>Subthalamic nucleus</tissue>
    </source>
</reference>
<reference key="4">
    <citation type="journal article" date="2003" name="Nature">
        <title>The DNA sequence of human chromosome 7.</title>
        <authorList>
            <person name="Hillier L.W."/>
            <person name="Fulton R.S."/>
            <person name="Fulton L.A."/>
            <person name="Graves T.A."/>
            <person name="Pepin K.H."/>
            <person name="Wagner-McPherson C."/>
            <person name="Layman D."/>
            <person name="Maas J."/>
            <person name="Jaeger S."/>
            <person name="Walker R."/>
            <person name="Wylie K."/>
            <person name="Sekhon M."/>
            <person name="Becker M.C."/>
            <person name="O'Laughlin M.D."/>
            <person name="Schaller M.E."/>
            <person name="Fewell G.A."/>
            <person name="Delehaunty K.D."/>
            <person name="Miner T.L."/>
            <person name="Nash W.E."/>
            <person name="Cordes M."/>
            <person name="Du H."/>
            <person name="Sun H."/>
            <person name="Edwards J."/>
            <person name="Bradshaw-Cordum H."/>
            <person name="Ali J."/>
            <person name="Andrews S."/>
            <person name="Isak A."/>
            <person name="Vanbrunt A."/>
            <person name="Nguyen C."/>
            <person name="Du F."/>
            <person name="Lamar B."/>
            <person name="Courtney L."/>
            <person name="Kalicki J."/>
            <person name="Ozersky P."/>
            <person name="Bielicki L."/>
            <person name="Scott K."/>
            <person name="Holmes A."/>
            <person name="Harkins R."/>
            <person name="Harris A."/>
            <person name="Strong C.M."/>
            <person name="Hou S."/>
            <person name="Tomlinson C."/>
            <person name="Dauphin-Kohlberg S."/>
            <person name="Kozlowicz-Reilly A."/>
            <person name="Leonard S."/>
            <person name="Rohlfing T."/>
            <person name="Rock S.M."/>
            <person name="Tin-Wollam A.-M."/>
            <person name="Abbott A."/>
            <person name="Minx P."/>
            <person name="Maupin R."/>
            <person name="Strowmatt C."/>
            <person name="Latreille P."/>
            <person name="Miller N."/>
            <person name="Johnson D."/>
            <person name="Murray J."/>
            <person name="Woessner J.P."/>
            <person name="Wendl M.C."/>
            <person name="Yang S.-P."/>
            <person name="Schultz B.R."/>
            <person name="Wallis J.W."/>
            <person name="Spieth J."/>
            <person name="Bieri T.A."/>
            <person name="Nelson J.O."/>
            <person name="Berkowicz N."/>
            <person name="Wohldmann P.E."/>
            <person name="Cook L.L."/>
            <person name="Hickenbotham M.T."/>
            <person name="Eldred J."/>
            <person name="Williams D."/>
            <person name="Bedell J.A."/>
            <person name="Mardis E.R."/>
            <person name="Clifton S.W."/>
            <person name="Chissoe S.L."/>
            <person name="Marra M.A."/>
            <person name="Raymond C."/>
            <person name="Haugen E."/>
            <person name="Gillett W."/>
            <person name="Zhou Y."/>
            <person name="James R."/>
            <person name="Phelps K."/>
            <person name="Iadanoto S."/>
            <person name="Bubb K."/>
            <person name="Simms E."/>
            <person name="Levy R."/>
            <person name="Clendenning J."/>
            <person name="Kaul R."/>
            <person name="Kent W.J."/>
            <person name="Furey T.S."/>
            <person name="Baertsch R.A."/>
            <person name="Brent M.R."/>
            <person name="Keibler E."/>
            <person name="Flicek P."/>
            <person name="Bork P."/>
            <person name="Suyama M."/>
            <person name="Bailey J.A."/>
            <person name="Portnoy M.E."/>
            <person name="Torrents D."/>
            <person name="Chinwalla A.T."/>
            <person name="Gish W.R."/>
            <person name="Eddy S.R."/>
            <person name="McPherson J.D."/>
            <person name="Olson M.V."/>
            <person name="Eichler E.E."/>
            <person name="Green E.D."/>
            <person name="Waterston R.H."/>
            <person name="Wilson R.K."/>
        </authorList>
    </citation>
    <scope>NUCLEOTIDE SEQUENCE [LARGE SCALE GENOMIC DNA]</scope>
</reference>
<reference key="5">
    <citation type="journal article" date="2004" name="Genome Res.">
        <title>The status, quality, and expansion of the NIH full-length cDNA project: the Mammalian Gene Collection (MGC).</title>
        <authorList>
            <consortium name="The MGC Project Team"/>
        </authorList>
    </citation>
    <scope>NUCLEOTIDE SEQUENCE [LARGE SCALE MRNA] (ISOFORM 2)</scope>
    <source>
        <tissue>Placenta</tissue>
    </source>
</reference>
<reference key="6">
    <citation type="journal article" date="2006" name="Glycobiology">
        <title>Chemoenzymatically synthesized multimeric Tn/STn MUC1 glycopeptides elicit cancer-specific anti-MUC1 antibody responses and override tolerance.</title>
        <authorList>
            <person name="Soerensen A.L."/>
            <person name="Reis C.A."/>
            <person name="Tarp M.A."/>
            <person name="Mandel U."/>
            <person name="Ramachandran K."/>
            <person name="Sankaranarayanan V."/>
            <person name="Schwientek T."/>
            <person name="Graham R."/>
            <person name="Taylor-Papadimitriou J."/>
            <person name="Hollingsworth M.A."/>
            <person name="Burchell J."/>
            <person name="Clausen H."/>
        </authorList>
    </citation>
    <scope>FUNCTION</scope>
    <scope>CATALYTIC ACTIVITY</scope>
</reference>
<reference key="7">
    <citation type="journal article" date="2011" name="Proc. Natl. Acad. Sci. U.S.A.">
        <title>Rare copy number variations in congenital heart disease patients identify unique genes in left-right patterning.</title>
        <authorList>
            <person name="Fakhro K.A."/>
            <person name="Choi M."/>
            <person name="Ware S.M."/>
            <person name="Belmont J.W."/>
            <person name="Towbin J.A."/>
            <person name="Lifton R.P."/>
            <person name="Khokha M.K."/>
            <person name="Brueckner M."/>
        </authorList>
    </citation>
    <scope>POSSIBLE INVOLVEMENT IN HETEROTAXY</scope>
</reference>
<reference key="8">
    <citation type="journal article" date="2013" name="Nature">
        <title>The heterotaxy gene GALNT11 glycosylates Notch to orchestrate cilia type and laterality.</title>
        <authorList>
            <person name="Boskovski M.T."/>
            <person name="Yuan S."/>
            <person name="Pedersen N.B."/>
            <person name="Goth C.K."/>
            <person name="Makova S."/>
            <person name="Clausen H."/>
            <person name="Brueckner M."/>
            <person name="Khokha M.K."/>
        </authorList>
    </citation>
    <scope>FUNCTION</scope>
    <scope>MUTAGENESIS OF HIS-247</scope>
    <scope>INTERACTION WITH NOTCH1</scope>
</reference>
<reference key="9">
    <citation type="journal article" date="2010" name="Leg. Med.">
        <title>A Japanese-specific allele in the GALNT11 gene.</title>
        <authorList>
            <person name="Yuasa I."/>
            <person name="Umetsu K."/>
            <person name="Matsusue A."/>
            <person name="Nishimukai H."/>
            <person name="Harihara S."/>
            <person name="Fukumori Y."/>
            <person name="Saitou N."/>
            <person name="Jin F."/>
            <person name="Chattopadhyay P.K."/>
            <person name="Henke L."/>
            <person name="Henke J."/>
        </authorList>
    </citation>
    <scope>VARIANT TYR-197</scope>
</reference>
<comment type="function">
    <text evidence="5 6 9">Polypeptide N-acetylgalactosaminyltransferase that catalyzes the initiation of protein O-linked glycosylation and is involved in left/right asymmetry by mediating O-glycosylation of NOTCH1. O-glycosylation of NOTCH1 promotes activation of NOTCH1, modulating the balance between motile and immotile (sensory) cilia at the left-right organiser (LRO). Polypeptide N-acetylgalactosaminyltransferases catalyze the transfer of an N-acetyl-D-galactosamine residue to a serine or threonine residue on the protein receptor. Displays the same enzyme activity toward MUC1, MUC4, and EA2 than GALNT1. Not involved in glycosylation of erythropoietin (EPO).</text>
</comment>
<comment type="catalytic activity">
    <reaction evidence="5 6">
        <text>L-seryl-[protein] + UDP-N-acetyl-alpha-D-galactosamine = a 3-O-[N-acetyl-alpha-D-galactosaminyl]-L-seryl-[protein] + UDP + H(+)</text>
        <dbReference type="Rhea" id="RHEA:23956"/>
        <dbReference type="Rhea" id="RHEA-COMP:9863"/>
        <dbReference type="Rhea" id="RHEA-COMP:12788"/>
        <dbReference type="ChEBI" id="CHEBI:15378"/>
        <dbReference type="ChEBI" id="CHEBI:29999"/>
        <dbReference type="ChEBI" id="CHEBI:53604"/>
        <dbReference type="ChEBI" id="CHEBI:58223"/>
        <dbReference type="ChEBI" id="CHEBI:67138"/>
        <dbReference type="EC" id="2.4.1.41"/>
    </reaction>
</comment>
<comment type="catalytic activity">
    <reaction evidence="5 6">
        <text>L-threonyl-[protein] + UDP-N-acetyl-alpha-D-galactosamine = a 3-O-[N-acetyl-alpha-D-galactosaminyl]-L-threonyl-[protein] + UDP + H(+)</text>
        <dbReference type="Rhea" id="RHEA:52424"/>
        <dbReference type="Rhea" id="RHEA-COMP:11060"/>
        <dbReference type="Rhea" id="RHEA-COMP:11689"/>
        <dbReference type="ChEBI" id="CHEBI:15378"/>
        <dbReference type="ChEBI" id="CHEBI:30013"/>
        <dbReference type="ChEBI" id="CHEBI:58223"/>
        <dbReference type="ChEBI" id="CHEBI:67138"/>
        <dbReference type="ChEBI" id="CHEBI:87075"/>
        <dbReference type="EC" id="2.4.1.41"/>
    </reaction>
</comment>
<comment type="cofactor">
    <cofactor evidence="1">
        <name>Mn(2+)</name>
        <dbReference type="ChEBI" id="CHEBI:29035"/>
    </cofactor>
</comment>
<comment type="pathway">
    <text>Protein modification; protein glycosylation.</text>
</comment>
<comment type="subunit">
    <text evidence="9">Interacts with NOTCH1.</text>
</comment>
<comment type="interaction">
    <interactant intactId="EBI-13364322">
        <id>Q8NCW6-2</id>
    </interactant>
    <interactant intactId="EBI-19954058">
        <id>O15499</id>
        <label>GSC2</label>
    </interactant>
    <organismsDiffer>false</organismsDiffer>
    <experiments>3</experiments>
</comment>
<comment type="interaction">
    <interactant intactId="EBI-13364322">
        <id>Q8NCW6-2</id>
    </interactant>
    <interactant intactId="EBI-744081">
        <id>Q96EQ0</id>
        <label>SGTB</label>
    </interactant>
    <organismsDiffer>false</organismsDiffer>
    <experiments>3</experiments>
</comment>
<comment type="subcellular location">
    <subcellularLocation>
        <location evidence="5">Golgi apparatus membrane</location>
        <topology evidence="5">Single-pass type II membrane protein</topology>
    </subcellularLocation>
</comment>
<comment type="alternative products">
    <event type="alternative splicing"/>
    <isoform>
        <id>Q8NCW6-1</id>
        <name>1</name>
        <sequence type="displayed"/>
    </isoform>
    <isoform>
        <id>Q8NCW6-2</id>
        <name>2</name>
        <sequence type="described" ref="VSP_011215 VSP_011216"/>
    </isoform>
</comment>
<comment type="tissue specificity">
    <text evidence="5">Highly expressed in kidney. Expressed at intermediate level in brain, heart and skeletal muscle. Weakly expressed other tissues. In kidney, it is strongly expressed in tubules but not expressed in glomeruli.</text>
</comment>
<comment type="domain">
    <text evidence="1">There are two conserved domains in the glycosyltransferase region: the N-terminal domain (domain A, also called GT1 motif), which is probably involved in manganese coordination and substrate binding and the C-terminal domain (domain B, also called Gal/GalNAc-T motif), which is probably involved in catalytic reaction and UDP-Gal binding.</text>
</comment>
<comment type="domain">
    <text evidence="1">The ricin B-type lectin domain binds to GalNAc and contributes to the glycopeptide specificity.</text>
</comment>
<comment type="disease">
    <text evidence="8">Defects in GALNT11 may be a cause of heterotaxy, a congenital heart disease resulting from abnormalities in left-right (LR) body patterning.</text>
</comment>
<comment type="similarity">
    <text evidence="11">Belongs to the glycosyltransferase 2 family. GalNAc-T subfamily.</text>
</comment>
<comment type="sequence caution" evidence="11">
    <conflict type="erroneous initiation">
        <sequence resource="EMBL-CDS" id="BAB15338"/>
    </conflict>
    <text>Truncated N-terminus.</text>
</comment>
<comment type="online information" name="Functional Glycomics Gateway - GTase">
    <link uri="http://www.functionalglycomics.org/glycomics/molecule/jsp/glycoEnzyme/viewGlycoEnzyme.jsp?gbpId=gt_hum_494"/>
    <text>Polypeptide N-acetylgalactosaminyltransferase 11</text>
</comment>
<evidence type="ECO:0000250" key="1"/>
<evidence type="ECO:0000250" key="2">
    <source>
        <dbReference type="UniProtKB" id="Q921L8"/>
    </source>
</evidence>
<evidence type="ECO:0000255" key="3"/>
<evidence type="ECO:0000255" key="4">
    <source>
        <dbReference type="PROSITE-ProRule" id="PRU00174"/>
    </source>
</evidence>
<evidence type="ECO:0000269" key="5">
    <source>
    </source>
</evidence>
<evidence type="ECO:0000269" key="6">
    <source>
    </source>
</evidence>
<evidence type="ECO:0000269" key="7">
    <source>
    </source>
</evidence>
<evidence type="ECO:0000269" key="8">
    <source>
    </source>
</evidence>
<evidence type="ECO:0000269" key="9">
    <source>
    </source>
</evidence>
<evidence type="ECO:0000303" key="10">
    <source>
    </source>
</evidence>
<evidence type="ECO:0000305" key="11"/>
<dbReference type="EC" id="2.4.1.41"/>
<dbReference type="EMBL" id="Y12434">
    <property type="protein sequence ID" value="CAC79625.3"/>
    <property type="molecule type" value="mRNA"/>
</dbReference>
<dbReference type="EMBL" id="AK025287">
    <property type="protein sequence ID" value="BAB15105.1"/>
    <property type="molecule type" value="mRNA"/>
</dbReference>
<dbReference type="EMBL" id="AK026056">
    <property type="protein sequence ID" value="BAB15338.1"/>
    <property type="status" value="ALT_INIT"/>
    <property type="molecule type" value="mRNA"/>
</dbReference>
<dbReference type="EMBL" id="AK124934">
    <property type="protein sequence ID" value="BAG54116.1"/>
    <property type="molecule type" value="mRNA"/>
</dbReference>
<dbReference type="EMBL" id="AC006017">
    <property type="protein sequence ID" value="AAD45821.1"/>
    <property type="molecule type" value="Genomic_DNA"/>
</dbReference>
<dbReference type="EMBL" id="BC059377">
    <property type="protein sequence ID" value="AAH59377.1"/>
    <property type="molecule type" value="mRNA"/>
</dbReference>
<dbReference type="CCDS" id="CCDS5930.1">
    <molecule id="Q8NCW6-1"/>
</dbReference>
<dbReference type="CCDS" id="CCDS94237.1">
    <molecule id="Q8NCW6-2"/>
</dbReference>
<dbReference type="RefSeq" id="NP_001358387.1">
    <molecule id="Q8NCW6-1"/>
    <property type="nucleotide sequence ID" value="NM_001371458.1"/>
</dbReference>
<dbReference type="RefSeq" id="NP_001358388.1">
    <molecule id="Q8NCW6-1"/>
    <property type="nucleotide sequence ID" value="NM_001371459.1"/>
</dbReference>
<dbReference type="RefSeq" id="NP_001358389.1">
    <molecule id="Q8NCW6-1"/>
    <property type="nucleotide sequence ID" value="NM_001371460.1"/>
</dbReference>
<dbReference type="RefSeq" id="NP_001358390.1">
    <molecule id="Q8NCW6-1"/>
    <property type="nucleotide sequence ID" value="NM_001371461.1"/>
</dbReference>
<dbReference type="RefSeq" id="NP_001358391.1">
    <molecule id="Q8NCW6-1"/>
    <property type="nucleotide sequence ID" value="NM_001371462.1"/>
</dbReference>
<dbReference type="RefSeq" id="NP_001358392.1">
    <molecule id="Q8NCW6-1"/>
    <property type="nucleotide sequence ID" value="NM_001371463.1"/>
</dbReference>
<dbReference type="RefSeq" id="NP_001358402.1">
    <molecule id="Q8NCW6-2"/>
    <property type="nucleotide sequence ID" value="NM_001371473.1"/>
</dbReference>
<dbReference type="RefSeq" id="NP_001358403.1">
    <molecule id="Q8NCW6-2"/>
    <property type="nucleotide sequence ID" value="NM_001371474.1"/>
</dbReference>
<dbReference type="RefSeq" id="NP_071370.2">
    <molecule id="Q8NCW6-1"/>
    <property type="nucleotide sequence ID" value="NM_022087.4"/>
</dbReference>
<dbReference type="RefSeq" id="XP_006716145.1">
    <property type="nucleotide sequence ID" value="XM_006716082.2"/>
</dbReference>
<dbReference type="RefSeq" id="XP_006716146.1">
    <molecule id="Q8NCW6-1"/>
    <property type="nucleotide sequence ID" value="XM_006716083.3"/>
</dbReference>
<dbReference type="RefSeq" id="XP_006716147.1">
    <molecule id="Q8NCW6-1"/>
    <property type="nucleotide sequence ID" value="XM_006716084.3"/>
</dbReference>
<dbReference type="RefSeq" id="XP_016867989.1">
    <property type="nucleotide sequence ID" value="XM_017012500.1"/>
</dbReference>
<dbReference type="RefSeq" id="XP_024302625.1">
    <molecule id="Q8NCW6-1"/>
    <property type="nucleotide sequence ID" value="XM_024446857.2"/>
</dbReference>
<dbReference type="RefSeq" id="XP_024302627.1">
    <molecule id="Q8NCW6-1"/>
    <property type="nucleotide sequence ID" value="XM_024446859.2"/>
</dbReference>
<dbReference type="RefSeq" id="XP_024302628.1">
    <molecule id="Q8NCW6-1"/>
    <property type="nucleotide sequence ID" value="XM_024446860.2"/>
</dbReference>
<dbReference type="RefSeq" id="XP_024302629.1">
    <molecule id="Q8NCW6-1"/>
    <property type="nucleotide sequence ID" value="XM_024446861.2"/>
</dbReference>
<dbReference type="RefSeq" id="XP_024302630.1">
    <molecule id="Q8NCW6-1"/>
    <property type="nucleotide sequence ID" value="XM_024446862.2"/>
</dbReference>
<dbReference type="RefSeq" id="XP_047276645.1">
    <molecule id="Q8NCW6-1"/>
    <property type="nucleotide sequence ID" value="XM_047420689.1"/>
</dbReference>
<dbReference type="RefSeq" id="XP_047276646.1">
    <molecule id="Q8NCW6-1"/>
    <property type="nucleotide sequence ID" value="XM_047420690.1"/>
</dbReference>
<dbReference type="RefSeq" id="XP_047276647.1">
    <molecule id="Q8NCW6-1"/>
    <property type="nucleotide sequence ID" value="XM_047420691.1"/>
</dbReference>
<dbReference type="RefSeq" id="XP_054214742.1">
    <molecule id="Q8NCW6-1"/>
    <property type="nucleotide sequence ID" value="XM_054358767.1"/>
</dbReference>
<dbReference type="RefSeq" id="XP_054214743.1">
    <molecule id="Q8NCW6-1"/>
    <property type="nucleotide sequence ID" value="XM_054358768.1"/>
</dbReference>
<dbReference type="RefSeq" id="XP_054214744.1">
    <molecule id="Q8NCW6-1"/>
    <property type="nucleotide sequence ID" value="XM_054358769.1"/>
</dbReference>
<dbReference type="RefSeq" id="XP_054214745.1">
    <molecule id="Q8NCW6-1"/>
    <property type="nucleotide sequence ID" value="XM_054358770.1"/>
</dbReference>
<dbReference type="RefSeq" id="XP_054214746.1">
    <molecule id="Q8NCW6-1"/>
    <property type="nucleotide sequence ID" value="XM_054358771.1"/>
</dbReference>
<dbReference type="RefSeq" id="XP_054214747.1">
    <molecule id="Q8NCW6-1"/>
    <property type="nucleotide sequence ID" value="XM_054358772.1"/>
</dbReference>
<dbReference type="RefSeq" id="XP_054214748.1">
    <molecule id="Q8NCW6-1"/>
    <property type="nucleotide sequence ID" value="XM_054358773.1"/>
</dbReference>
<dbReference type="RefSeq" id="XP_054214749.1">
    <molecule id="Q8NCW6-1"/>
    <property type="nucleotide sequence ID" value="XM_054358774.1"/>
</dbReference>
<dbReference type="RefSeq" id="XP_054214750.1">
    <molecule id="Q8NCW6-1"/>
    <property type="nucleotide sequence ID" value="XM_054358775.1"/>
</dbReference>
<dbReference type="RefSeq" id="XP_054214751.1">
    <molecule id="Q8NCW6-1"/>
    <property type="nucleotide sequence ID" value="XM_054358776.1"/>
</dbReference>
<dbReference type="SMR" id="Q8NCW6"/>
<dbReference type="BioGRID" id="121988">
    <property type="interactions" value="33"/>
</dbReference>
<dbReference type="FunCoup" id="Q8NCW6">
    <property type="interactions" value="626"/>
</dbReference>
<dbReference type="IntAct" id="Q8NCW6">
    <property type="interactions" value="26"/>
</dbReference>
<dbReference type="STRING" id="9606.ENSP00000416787"/>
<dbReference type="CAZy" id="CBM13">
    <property type="family name" value="Carbohydrate-Binding Module Family 13"/>
</dbReference>
<dbReference type="CAZy" id="GT27">
    <property type="family name" value="Glycosyltransferase Family 27"/>
</dbReference>
<dbReference type="GlyCosmos" id="Q8NCW6">
    <property type="glycosylation" value="2 sites, 1 glycan"/>
</dbReference>
<dbReference type="GlyGen" id="Q8NCW6">
    <property type="glycosylation" value="2 sites, 4 N-linked glycans (1 site), 1 O-linked glycan (1 site)"/>
</dbReference>
<dbReference type="iPTMnet" id="Q8NCW6"/>
<dbReference type="PhosphoSitePlus" id="Q8NCW6"/>
<dbReference type="BioMuta" id="GALNT11"/>
<dbReference type="DMDM" id="51316030"/>
<dbReference type="jPOST" id="Q8NCW6"/>
<dbReference type="MassIVE" id="Q8NCW6"/>
<dbReference type="PaxDb" id="9606-ENSP00000416787"/>
<dbReference type="PeptideAtlas" id="Q8NCW6"/>
<dbReference type="ProteomicsDB" id="72960">
    <molecule id="Q8NCW6-1"/>
</dbReference>
<dbReference type="ProteomicsDB" id="72961">
    <molecule id="Q8NCW6-2"/>
</dbReference>
<dbReference type="Antibodypedia" id="52579">
    <property type="antibodies" value="114 antibodies from 17 providers"/>
</dbReference>
<dbReference type="DNASU" id="63917"/>
<dbReference type="Ensembl" id="ENST00000415421.5">
    <molecule id="Q8NCW6-2"/>
    <property type="protein sequence ID" value="ENSP00000410093.1"/>
    <property type="gene ID" value="ENSG00000178234.13"/>
</dbReference>
<dbReference type="Ensembl" id="ENST00000422997.6">
    <molecule id="Q8NCW6-2"/>
    <property type="protein sequence ID" value="ENSP00000389449.3"/>
    <property type="gene ID" value="ENSG00000178234.13"/>
</dbReference>
<dbReference type="Ensembl" id="ENST00000430044.7">
    <molecule id="Q8NCW6-1"/>
    <property type="protein sequence ID" value="ENSP00000395122.2"/>
    <property type="gene ID" value="ENSG00000178234.13"/>
</dbReference>
<dbReference type="Ensembl" id="ENST00000434507.5">
    <molecule id="Q8NCW6-1"/>
    <property type="protein sequence ID" value="ENSP00000416787.1"/>
    <property type="gene ID" value="ENSG00000178234.13"/>
</dbReference>
<dbReference type="GeneID" id="63917"/>
<dbReference type="KEGG" id="hsa:63917"/>
<dbReference type="MANE-Select" id="ENST00000430044.7">
    <property type="protein sequence ID" value="ENSP00000395122.2"/>
    <property type="RefSeq nucleotide sequence ID" value="NM_022087.4"/>
    <property type="RefSeq protein sequence ID" value="NP_071370.2"/>
</dbReference>
<dbReference type="UCSC" id="uc003wku.3">
    <molecule id="Q8NCW6-1"/>
    <property type="organism name" value="human"/>
</dbReference>
<dbReference type="AGR" id="HGNC:19875"/>
<dbReference type="CTD" id="63917"/>
<dbReference type="DisGeNET" id="63917"/>
<dbReference type="GeneCards" id="GALNT11"/>
<dbReference type="HGNC" id="HGNC:19875">
    <property type="gene designation" value="GALNT11"/>
</dbReference>
<dbReference type="HPA" id="ENSG00000178234">
    <property type="expression patterns" value="Group enriched (choroid plexus, kidney)"/>
</dbReference>
<dbReference type="MIM" id="615130">
    <property type="type" value="gene"/>
</dbReference>
<dbReference type="neXtProt" id="NX_Q8NCW6"/>
<dbReference type="OpenTargets" id="ENSG00000178234"/>
<dbReference type="PharmGKB" id="PA134911149"/>
<dbReference type="VEuPathDB" id="HostDB:ENSG00000178234"/>
<dbReference type="eggNOG" id="KOG3736">
    <property type="taxonomic scope" value="Eukaryota"/>
</dbReference>
<dbReference type="GeneTree" id="ENSGT00940000158227"/>
<dbReference type="HOGENOM" id="CLU_013477_0_1_1"/>
<dbReference type="InParanoid" id="Q8NCW6"/>
<dbReference type="OMA" id="PVFQPWH"/>
<dbReference type="OrthoDB" id="5988548at2759"/>
<dbReference type="PAN-GO" id="Q8NCW6">
    <property type="GO annotations" value="5 GO annotations based on evolutionary models"/>
</dbReference>
<dbReference type="PhylomeDB" id="Q8NCW6"/>
<dbReference type="TreeFam" id="TF313267"/>
<dbReference type="BRENDA" id="2.4.1.41">
    <property type="organism ID" value="2681"/>
</dbReference>
<dbReference type="PathwayCommons" id="Q8NCW6"/>
<dbReference type="Reactome" id="R-HSA-913709">
    <property type="pathway name" value="O-linked glycosylation of mucins"/>
</dbReference>
<dbReference type="SABIO-RK" id="Q8NCW6"/>
<dbReference type="SignaLink" id="Q8NCW6"/>
<dbReference type="UniPathway" id="UPA00378"/>
<dbReference type="BioGRID-ORCS" id="63917">
    <property type="hits" value="10 hits in 1165 CRISPR screens"/>
</dbReference>
<dbReference type="ChiTaRS" id="GALNT11">
    <property type="organism name" value="human"/>
</dbReference>
<dbReference type="GenomeRNAi" id="63917"/>
<dbReference type="Pharos" id="Q8NCW6">
    <property type="development level" value="Tbio"/>
</dbReference>
<dbReference type="PRO" id="PR:Q8NCW6"/>
<dbReference type="Proteomes" id="UP000005640">
    <property type="component" value="Chromosome 7"/>
</dbReference>
<dbReference type="RNAct" id="Q8NCW6">
    <property type="molecule type" value="protein"/>
</dbReference>
<dbReference type="Bgee" id="ENSG00000178234">
    <property type="expression patterns" value="Expressed in choroid plexus epithelium and 210 other cell types or tissues"/>
</dbReference>
<dbReference type="ExpressionAtlas" id="Q8NCW6">
    <property type="expression patterns" value="baseline and differential"/>
</dbReference>
<dbReference type="GO" id="GO:0005794">
    <property type="term" value="C:Golgi apparatus"/>
    <property type="evidence" value="ECO:0000318"/>
    <property type="project" value="GO_Central"/>
</dbReference>
<dbReference type="GO" id="GO:0000139">
    <property type="term" value="C:Golgi membrane"/>
    <property type="evidence" value="ECO:0000304"/>
    <property type="project" value="Reactome"/>
</dbReference>
<dbReference type="GO" id="GO:0030246">
    <property type="term" value="F:carbohydrate binding"/>
    <property type="evidence" value="ECO:0007669"/>
    <property type="project" value="UniProtKB-KW"/>
</dbReference>
<dbReference type="GO" id="GO:0046872">
    <property type="term" value="F:metal ion binding"/>
    <property type="evidence" value="ECO:0007669"/>
    <property type="project" value="UniProtKB-KW"/>
</dbReference>
<dbReference type="GO" id="GO:0005112">
    <property type="term" value="F:Notch binding"/>
    <property type="evidence" value="ECO:0000314"/>
    <property type="project" value="UniProtKB"/>
</dbReference>
<dbReference type="GO" id="GO:0004653">
    <property type="term" value="F:polypeptide N-acetylgalactosaminyltransferase activity"/>
    <property type="evidence" value="ECO:0000314"/>
    <property type="project" value="UniProtKB"/>
</dbReference>
<dbReference type="GO" id="GO:0060271">
    <property type="term" value="P:cilium assembly"/>
    <property type="evidence" value="ECO:0000250"/>
    <property type="project" value="UniProtKB"/>
</dbReference>
<dbReference type="GO" id="GO:0007368">
    <property type="term" value="P:determination of left/right symmetry"/>
    <property type="evidence" value="ECO:0000250"/>
    <property type="project" value="UniProtKB"/>
</dbReference>
<dbReference type="GO" id="GO:0007220">
    <property type="term" value="P:Notch receptor processing"/>
    <property type="evidence" value="ECO:0000250"/>
    <property type="project" value="UniProtKB"/>
</dbReference>
<dbReference type="GO" id="GO:0061314">
    <property type="term" value="P:Notch signaling involved in heart development"/>
    <property type="evidence" value="ECO:0000250"/>
    <property type="project" value="UniProtKB"/>
</dbReference>
<dbReference type="GO" id="GO:0016266">
    <property type="term" value="P:O-glycan processing"/>
    <property type="evidence" value="ECO:0000304"/>
    <property type="project" value="Reactome"/>
</dbReference>
<dbReference type="GO" id="GO:0006493">
    <property type="term" value="P:protein O-linked glycosylation"/>
    <property type="evidence" value="ECO:0000318"/>
    <property type="project" value="GO_Central"/>
</dbReference>
<dbReference type="GO" id="GO:0018243">
    <property type="term" value="P:protein O-linked glycosylation via threonine"/>
    <property type="evidence" value="ECO:0000314"/>
    <property type="project" value="UniProtKB"/>
</dbReference>
<dbReference type="GO" id="GO:0008593">
    <property type="term" value="P:regulation of Notch signaling pathway"/>
    <property type="evidence" value="ECO:0000250"/>
    <property type="project" value="UniProtKB"/>
</dbReference>
<dbReference type="CDD" id="cd23440">
    <property type="entry name" value="beta-trefoil_Ricin_GALNT11"/>
    <property type="match status" value="1"/>
</dbReference>
<dbReference type="CDD" id="cd02510">
    <property type="entry name" value="pp-GalNAc-T"/>
    <property type="match status" value="1"/>
</dbReference>
<dbReference type="FunFam" id="2.80.10.50:FF:000029">
    <property type="entry name" value="Polypeptide N-acetylgalactosaminyltransferase"/>
    <property type="match status" value="1"/>
</dbReference>
<dbReference type="FunFam" id="3.90.550.10:FF:000053">
    <property type="entry name" value="Polypeptide N-acetylgalactosaminyltransferase"/>
    <property type="match status" value="1"/>
</dbReference>
<dbReference type="Gene3D" id="2.80.10.50">
    <property type="match status" value="1"/>
</dbReference>
<dbReference type="Gene3D" id="3.90.550.10">
    <property type="entry name" value="Spore Coat Polysaccharide Biosynthesis Protein SpsA, Chain A"/>
    <property type="match status" value="1"/>
</dbReference>
<dbReference type="InterPro" id="IPR045885">
    <property type="entry name" value="GalNAc-T"/>
</dbReference>
<dbReference type="InterPro" id="IPR001173">
    <property type="entry name" value="Glyco_trans_2-like"/>
</dbReference>
<dbReference type="InterPro" id="IPR029044">
    <property type="entry name" value="Nucleotide-diphossugar_trans"/>
</dbReference>
<dbReference type="InterPro" id="IPR035992">
    <property type="entry name" value="Ricin_B-like_lectins"/>
</dbReference>
<dbReference type="InterPro" id="IPR000772">
    <property type="entry name" value="Ricin_B_lectin"/>
</dbReference>
<dbReference type="PANTHER" id="PTHR11675">
    <property type="entry name" value="N-ACETYLGALACTOSAMINYLTRANSFERASE"/>
    <property type="match status" value="1"/>
</dbReference>
<dbReference type="PANTHER" id="PTHR11675:SF10">
    <property type="entry name" value="POLYPEPTIDE N-ACETYLGALACTOSAMINYLTRANSFERASE 11"/>
    <property type="match status" value="1"/>
</dbReference>
<dbReference type="Pfam" id="PF00535">
    <property type="entry name" value="Glycos_transf_2"/>
    <property type="match status" value="1"/>
</dbReference>
<dbReference type="Pfam" id="PF00652">
    <property type="entry name" value="Ricin_B_lectin"/>
    <property type="match status" value="1"/>
</dbReference>
<dbReference type="SMART" id="SM00458">
    <property type="entry name" value="RICIN"/>
    <property type="match status" value="1"/>
</dbReference>
<dbReference type="SUPFAM" id="SSF53448">
    <property type="entry name" value="Nucleotide-diphospho-sugar transferases"/>
    <property type="match status" value="1"/>
</dbReference>
<dbReference type="SUPFAM" id="SSF50370">
    <property type="entry name" value="Ricin B-like lectins"/>
    <property type="match status" value="1"/>
</dbReference>
<dbReference type="PROSITE" id="PS50231">
    <property type="entry name" value="RICIN_B_LECTIN"/>
    <property type="match status" value="1"/>
</dbReference>
<name>GLT11_HUMAN</name>
<proteinExistence type="evidence at protein level"/>
<gene>
    <name type="primary">GALNT11</name>
</gene>
<accession>Q8NCW6</accession>
<accession>B3KWF4</accession>
<accession>Q6PCD1</accession>
<accession>Q9H6C2</accession>
<accession>Q9H6Z5</accession>
<accession>Q9UDR8</accession>
<organism>
    <name type="scientific">Homo sapiens</name>
    <name type="common">Human</name>
    <dbReference type="NCBI Taxonomy" id="9606"/>
    <lineage>
        <taxon>Eukaryota</taxon>
        <taxon>Metazoa</taxon>
        <taxon>Chordata</taxon>
        <taxon>Craniata</taxon>
        <taxon>Vertebrata</taxon>
        <taxon>Euteleostomi</taxon>
        <taxon>Mammalia</taxon>
        <taxon>Eutheria</taxon>
        <taxon>Euarchontoglires</taxon>
        <taxon>Primates</taxon>
        <taxon>Haplorrhini</taxon>
        <taxon>Catarrhini</taxon>
        <taxon>Hominidae</taxon>
        <taxon>Homo</taxon>
    </lineage>
</organism>
<feature type="chain" id="PRO_0000059125" description="Polypeptide N-acetylgalactosaminyltransferase 11">
    <location>
        <begin position="1"/>
        <end position="608"/>
    </location>
</feature>
<feature type="topological domain" description="Cytoplasmic" evidence="3">
    <location>
        <begin position="1"/>
        <end position="6"/>
    </location>
</feature>
<feature type="transmembrane region" description="Helical; Signal-anchor for type II membrane protein" evidence="3">
    <location>
        <begin position="7"/>
        <end position="29"/>
    </location>
</feature>
<feature type="topological domain" description="Lumenal" evidence="3">
    <location>
        <begin position="30"/>
        <end position="608"/>
    </location>
</feature>
<feature type="domain" description="Ricin B-type lectin" evidence="4">
    <location>
        <begin position="476"/>
        <end position="607"/>
    </location>
</feature>
<feature type="region of interest" description="Catalytic subdomain A">
    <location>
        <begin position="150"/>
        <end position="261"/>
    </location>
</feature>
<feature type="region of interest" description="Catalytic subdomain B">
    <location>
        <begin position="319"/>
        <end position="381"/>
    </location>
</feature>
<feature type="binding site" evidence="1">
    <location>
        <position position="191"/>
    </location>
    <ligand>
        <name>substrate</name>
    </ligand>
</feature>
<feature type="binding site" evidence="1">
    <location>
        <position position="222"/>
    </location>
    <ligand>
        <name>substrate</name>
    </ligand>
</feature>
<feature type="binding site" evidence="1">
    <location>
        <position position="245"/>
    </location>
    <ligand>
        <name>Mn(2+)</name>
        <dbReference type="ChEBI" id="CHEBI:29035"/>
    </ligand>
</feature>
<feature type="binding site" evidence="1">
    <location>
        <position position="246"/>
    </location>
    <ligand>
        <name>substrate</name>
    </ligand>
</feature>
<feature type="binding site" evidence="1">
    <location>
        <position position="247"/>
    </location>
    <ligand>
        <name>Mn(2+)</name>
        <dbReference type="ChEBI" id="CHEBI:29035"/>
    </ligand>
</feature>
<feature type="binding site" evidence="1">
    <location>
        <position position="350"/>
    </location>
    <ligand>
        <name>substrate</name>
    </ligand>
</feature>
<feature type="binding site" evidence="1">
    <location>
        <position position="378"/>
    </location>
    <ligand>
        <name>Mn(2+)</name>
        <dbReference type="ChEBI" id="CHEBI:29035"/>
    </ligand>
</feature>
<feature type="binding site" evidence="1">
    <location>
        <position position="381"/>
    </location>
    <ligand>
        <name>substrate</name>
    </ligand>
</feature>
<feature type="binding site" evidence="1">
    <location>
        <position position="386"/>
    </location>
    <ligand>
        <name>substrate</name>
    </ligand>
</feature>
<feature type="modified residue" description="Phosphoserine" evidence="2">
    <location>
        <position position="95"/>
    </location>
</feature>
<feature type="glycosylation site" description="N-linked (GlcNAc...) asparagine" evidence="3">
    <location>
        <position position="428"/>
    </location>
</feature>
<feature type="disulfide bond" evidence="4">
    <location>
        <begin position="141"/>
        <end position="373"/>
    </location>
</feature>
<feature type="disulfide bond" evidence="4">
    <location>
        <begin position="364"/>
        <end position="441"/>
    </location>
</feature>
<feature type="disulfide bond" evidence="4">
    <location>
        <begin position="493"/>
        <end position="512"/>
    </location>
</feature>
<feature type="disulfide bond" evidence="4">
    <location>
        <begin position="536"/>
        <end position="553"/>
    </location>
</feature>
<feature type="disulfide bond" evidence="4">
    <location>
        <begin position="578"/>
        <end position="596"/>
    </location>
</feature>
<feature type="splice variant" id="VSP_011215" description="In isoform 2." evidence="10">
    <original>DDLKGEL</original>
    <variation>GKECCTW</variation>
    <location>
        <begin position="196"/>
        <end position="202"/>
    </location>
</feature>
<feature type="splice variant" id="VSP_011216" description="In isoform 2." evidence="10">
    <location>
        <begin position="203"/>
        <end position="608"/>
    </location>
</feature>
<feature type="sequence variant" id="VAR_019589" description="In dbSNP:rs6464201.">
    <original>P</original>
    <variation>S</variation>
    <location>
        <position position="151"/>
    </location>
</feature>
<feature type="sequence variant" id="VAR_019590" description="In dbSNP:rs3778922." evidence="7">
    <original>D</original>
    <variation>Y</variation>
    <location>
        <position position="197"/>
    </location>
</feature>
<feature type="mutagenesis site" description="Abolishes glycosyltransferase activity and ability to rescue left-right patterning defects induced by galnt11 knockdown in X.tropicalis." evidence="9">
    <original>H</original>
    <variation>A</variation>
    <location>
        <position position="247"/>
    </location>
</feature>
<feature type="sequence conflict" description="In Ref. 3; BAG54116." evidence="11" ref="3">
    <original>F</original>
    <variation>L</variation>
    <location>
        <position position="94"/>
    </location>
</feature>
<feature type="sequence conflict" description="In Ref. 3; BAB15105." evidence="11" ref="3">
    <original>M</original>
    <variation>V</variation>
    <location>
        <position position="551"/>
    </location>
</feature>
<feature type="sequence conflict" description="In Ref. 3; BAB15105." evidence="11" ref="3">
    <original>Q</original>
    <variation>L</variation>
    <location>
        <position position="577"/>
    </location>
</feature>
<protein>
    <recommendedName>
        <fullName>Polypeptide N-acetylgalactosaminyltransferase 11</fullName>
        <ecNumber>2.4.1.41</ecNumber>
    </recommendedName>
    <alternativeName>
        <fullName>Polypeptide GalNAc transferase 11</fullName>
        <shortName>GalNAc-T11</shortName>
        <shortName>pp-GaNTase 11</shortName>
    </alternativeName>
    <alternativeName>
        <fullName>Protein-UDP acetylgalactosaminyltransferase 11</fullName>
    </alternativeName>
    <alternativeName>
        <fullName>UDP-GalNAc:polypeptide N-acetylgalactosaminyltransferase 11</fullName>
    </alternativeName>
</protein>
<keyword id="KW-0025">Alternative splicing</keyword>
<keyword id="KW-1015">Disulfide bond</keyword>
<keyword id="KW-0325">Glycoprotein</keyword>
<keyword id="KW-0328">Glycosyltransferase</keyword>
<keyword id="KW-0333">Golgi apparatus</keyword>
<keyword id="KW-1056">Heterotaxy</keyword>
<keyword id="KW-0430">Lectin</keyword>
<keyword id="KW-0464">Manganese</keyword>
<keyword id="KW-0472">Membrane</keyword>
<keyword id="KW-0479">Metal-binding</keyword>
<keyword id="KW-0914">Notch signaling pathway</keyword>
<keyword id="KW-0597">Phosphoprotein</keyword>
<keyword id="KW-1267">Proteomics identification</keyword>
<keyword id="KW-1185">Reference proteome</keyword>
<keyword id="KW-0735">Signal-anchor</keyword>
<keyword id="KW-0808">Transferase</keyword>
<keyword id="KW-0812">Transmembrane</keyword>
<keyword id="KW-1133">Transmembrane helix</keyword>
<sequence length="608" mass="68919">MGSVTVRYFCYGCLFTSATWTVLLFVYFNFSEVTQPLKNVPVKGSGPHGPSPKKFYPRFTRGPSRVLEPQFKANKIDDVIDSRVEDPEEGHLKFSSELGMIFNERDQELRDLGYQKHAFNMLISDRLGYHRDVPDTRNAACKEKFYPPDLPAASVVICFYNEAFSALLRTVHSVIDRTPAHLLHEIILVDDDSDFDDLKGELDEYVQKYLPGKIKVIRNTKREGLIRGRMIGAAHATGEVLVFLDSHCEVNVMWLQPLLAAIREDRHTVVCPVIDIISADTLAYSSSPVVRGGFNWGLHFKWDLVPLSELGRAEGATAPIKSPTMAGGLFAMNRQYFHELGQYDSGMDIWGGENLEISFRIWMCGGKLFIIPCSRVGHIFRKRRPYGSPEGQDTMTHNSLRLAHVWLDEYKEQYFSLRPDLKTKSYGNISERVELRKKLGCKSFKWYLDNVYPEMQISGSHAKPQQPIFVNRGPKRPKVLQRGRLYHLQTNKCLVAQGRPSQKGGLVVLKACDYSDPNQIWIYNEEHELVLNSLLCLDMSETRSSDPPRLMKCHGSGGSQQWTFGKNNRLYQVSVGQCLRAVDPLGQKGSVAMAICDGSSSQQWHLEG</sequence>